<name>APOC3_MOUSE</name>
<sequence>MQPRTLLTVALLALLASARAEEVEGSLLLGSVQGYMEQASKTVQDALSSVQESDIAVVARGWMDNHFRFLKGYWSKFTDKFTGFWDSNPEDQPTPAIES</sequence>
<evidence type="ECO:0000250" key="1"/>
<evidence type="ECO:0000250" key="2">
    <source>
        <dbReference type="UniProtKB" id="P02656"/>
    </source>
</evidence>
<evidence type="ECO:0000255" key="3"/>
<evidence type="ECO:0000269" key="4">
    <source>
    </source>
</evidence>
<evidence type="ECO:0000305" key="5"/>
<accession>P33622</accession>
<accession>Q8VC58</accession>
<accession>Q9CPP9</accession>
<reference key="1">
    <citation type="journal article" date="1992" name="Genomics">
        <title>Characterization of the mouse apolipoprotein Apoa-1/Apoc-3 gene locus: genomic, mRNA, and protein sequences with comparisons to other species.</title>
        <authorList>
            <person name="Januzzi J.L."/>
            <person name="Azrolan N."/>
            <person name="O'Connell A."/>
            <person name="Aalto-Setala K."/>
            <person name="Breslow J.L."/>
        </authorList>
    </citation>
    <scope>NUCLEOTIDE SEQUENCE [GENOMIC DNA / MRNA]</scope>
</reference>
<reference key="2">
    <citation type="journal article" date="2005" name="Science">
        <title>The transcriptional landscape of the mammalian genome.</title>
        <authorList>
            <person name="Carninci P."/>
            <person name="Kasukawa T."/>
            <person name="Katayama S."/>
            <person name="Gough J."/>
            <person name="Frith M.C."/>
            <person name="Maeda N."/>
            <person name="Oyama R."/>
            <person name="Ravasi T."/>
            <person name="Lenhard B."/>
            <person name="Wells C."/>
            <person name="Kodzius R."/>
            <person name="Shimokawa K."/>
            <person name="Bajic V.B."/>
            <person name="Brenner S.E."/>
            <person name="Batalov S."/>
            <person name="Forrest A.R."/>
            <person name="Zavolan M."/>
            <person name="Davis M.J."/>
            <person name="Wilming L.G."/>
            <person name="Aidinis V."/>
            <person name="Allen J.E."/>
            <person name="Ambesi-Impiombato A."/>
            <person name="Apweiler R."/>
            <person name="Aturaliya R.N."/>
            <person name="Bailey T.L."/>
            <person name="Bansal M."/>
            <person name="Baxter L."/>
            <person name="Beisel K.W."/>
            <person name="Bersano T."/>
            <person name="Bono H."/>
            <person name="Chalk A.M."/>
            <person name="Chiu K.P."/>
            <person name="Choudhary V."/>
            <person name="Christoffels A."/>
            <person name="Clutterbuck D.R."/>
            <person name="Crowe M.L."/>
            <person name="Dalla E."/>
            <person name="Dalrymple B.P."/>
            <person name="de Bono B."/>
            <person name="Della Gatta G."/>
            <person name="di Bernardo D."/>
            <person name="Down T."/>
            <person name="Engstrom P."/>
            <person name="Fagiolini M."/>
            <person name="Faulkner G."/>
            <person name="Fletcher C.F."/>
            <person name="Fukushima T."/>
            <person name="Furuno M."/>
            <person name="Futaki S."/>
            <person name="Gariboldi M."/>
            <person name="Georgii-Hemming P."/>
            <person name="Gingeras T.R."/>
            <person name="Gojobori T."/>
            <person name="Green R.E."/>
            <person name="Gustincich S."/>
            <person name="Harbers M."/>
            <person name="Hayashi Y."/>
            <person name="Hensch T.K."/>
            <person name="Hirokawa N."/>
            <person name="Hill D."/>
            <person name="Huminiecki L."/>
            <person name="Iacono M."/>
            <person name="Ikeo K."/>
            <person name="Iwama A."/>
            <person name="Ishikawa T."/>
            <person name="Jakt M."/>
            <person name="Kanapin A."/>
            <person name="Katoh M."/>
            <person name="Kawasawa Y."/>
            <person name="Kelso J."/>
            <person name="Kitamura H."/>
            <person name="Kitano H."/>
            <person name="Kollias G."/>
            <person name="Krishnan S.P."/>
            <person name="Kruger A."/>
            <person name="Kummerfeld S.K."/>
            <person name="Kurochkin I.V."/>
            <person name="Lareau L.F."/>
            <person name="Lazarevic D."/>
            <person name="Lipovich L."/>
            <person name="Liu J."/>
            <person name="Liuni S."/>
            <person name="McWilliam S."/>
            <person name="Madan Babu M."/>
            <person name="Madera M."/>
            <person name="Marchionni L."/>
            <person name="Matsuda H."/>
            <person name="Matsuzawa S."/>
            <person name="Miki H."/>
            <person name="Mignone F."/>
            <person name="Miyake S."/>
            <person name="Morris K."/>
            <person name="Mottagui-Tabar S."/>
            <person name="Mulder N."/>
            <person name="Nakano N."/>
            <person name="Nakauchi H."/>
            <person name="Ng P."/>
            <person name="Nilsson R."/>
            <person name="Nishiguchi S."/>
            <person name="Nishikawa S."/>
            <person name="Nori F."/>
            <person name="Ohara O."/>
            <person name="Okazaki Y."/>
            <person name="Orlando V."/>
            <person name="Pang K.C."/>
            <person name="Pavan W.J."/>
            <person name="Pavesi G."/>
            <person name="Pesole G."/>
            <person name="Petrovsky N."/>
            <person name="Piazza S."/>
            <person name="Reed J."/>
            <person name="Reid J.F."/>
            <person name="Ring B.Z."/>
            <person name="Ringwald M."/>
            <person name="Rost B."/>
            <person name="Ruan Y."/>
            <person name="Salzberg S.L."/>
            <person name="Sandelin A."/>
            <person name="Schneider C."/>
            <person name="Schoenbach C."/>
            <person name="Sekiguchi K."/>
            <person name="Semple C.A."/>
            <person name="Seno S."/>
            <person name="Sessa L."/>
            <person name="Sheng Y."/>
            <person name="Shibata Y."/>
            <person name="Shimada H."/>
            <person name="Shimada K."/>
            <person name="Silva D."/>
            <person name="Sinclair B."/>
            <person name="Sperling S."/>
            <person name="Stupka E."/>
            <person name="Sugiura K."/>
            <person name="Sultana R."/>
            <person name="Takenaka Y."/>
            <person name="Taki K."/>
            <person name="Tammoja K."/>
            <person name="Tan S.L."/>
            <person name="Tang S."/>
            <person name="Taylor M.S."/>
            <person name="Tegner J."/>
            <person name="Teichmann S.A."/>
            <person name="Ueda H.R."/>
            <person name="van Nimwegen E."/>
            <person name="Verardo R."/>
            <person name="Wei C.L."/>
            <person name="Yagi K."/>
            <person name="Yamanishi H."/>
            <person name="Zabarovsky E."/>
            <person name="Zhu S."/>
            <person name="Zimmer A."/>
            <person name="Hide W."/>
            <person name="Bult C."/>
            <person name="Grimmond S.M."/>
            <person name="Teasdale R.D."/>
            <person name="Liu E.T."/>
            <person name="Brusic V."/>
            <person name="Quackenbush J."/>
            <person name="Wahlestedt C."/>
            <person name="Mattick J.S."/>
            <person name="Hume D.A."/>
            <person name="Kai C."/>
            <person name="Sasaki D."/>
            <person name="Tomaru Y."/>
            <person name="Fukuda S."/>
            <person name="Kanamori-Katayama M."/>
            <person name="Suzuki M."/>
            <person name="Aoki J."/>
            <person name="Arakawa T."/>
            <person name="Iida J."/>
            <person name="Imamura K."/>
            <person name="Itoh M."/>
            <person name="Kato T."/>
            <person name="Kawaji H."/>
            <person name="Kawagashira N."/>
            <person name="Kawashima T."/>
            <person name="Kojima M."/>
            <person name="Kondo S."/>
            <person name="Konno H."/>
            <person name="Nakano K."/>
            <person name="Ninomiya N."/>
            <person name="Nishio T."/>
            <person name="Okada M."/>
            <person name="Plessy C."/>
            <person name="Shibata K."/>
            <person name="Shiraki T."/>
            <person name="Suzuki S."/>
            <person name="Tagami M."/>
            <person name="Waki K."/>
            <person name="Watahiki A."/>
            <person name="Okamura-Oho Y."/>
            <person name="Suzuki H."/>
            <person name="Kawai J."/>
            <person name="Hayashizaki Y."/>
        </authorList>
    </citation>
    <scope>NUCLEOTIDE SEQUENCE [LARGE SCALE MRNA]</scope>
    <source>
        <strain>C57BL/6J</strain>
        <tissue>Kidney</tissue>
        <tissue>Small intestine</tissue>
    </source>
</reference>
<reference key="3">
    <citation type="journal article" date="2004" name="Genome Res.">
        <title>The status, quality, and expansion of the NIH full-length cDNA project: the Mammalian Gene Collection (MGC).</title>
        <authorList>
            <consortium name="The MGC Project Team"/>
        </authorList>
    </citation>
    <scope>NUCLEOTIDE SEQUENCE [LARGE SCALE MRNA]</scope>
    <source>
        <tissue>Liver</tissue>
    </source>
</reference>
<reference key="4">
    <citation type="journal article" date="2006" name="Biochim. Biophys. Acta">
        <title>Mass spectral analysis of the apolipoproteins on mouse high density lipoproteins. Detection of post-translational modifications.</title>
        <authorList>
            <person name="Puppione D.L."/>
            <person name="Yam L.M."/>
            <person name="Bassilian S."/>
            <person name="Souda P."/>
            <person name="Castellani L.W."/>
            <person name="Schumaker V.N."/>
            <person name="Whitelegge J.P."/>
        </authorList>
    </citation>
    <scope>PROTEIN SEQUENCE OF 42-68</scope>
    <scope>MASS SPECTROMETRY</scope>
    <scope>OXIDATION AT MET-63</scope>
</reference>
<reference key="5">
    <citation type="journal article" date="2010" name="Cell">
        <title>A tissue-specific atlas of mouse protein phosphorylation and expression.</title>
        <authorList>
            <person name="Huttlin E.L."/>
            <person name="Jedrychowski M.P."/>
            <person name="Elias J.E."/>
            <person name="Goswami T."/>
            <person name="Rad R."/>
            <person name="Beausoleil S.A."/>
            <person name="Villen J."/>
            <person name="Haas W."/>
            <person name="Sowa M.E."/>
            <person name="Gygi S.P."/>
        </authorList>
    </citation>
    <scope>IDENTIFICATION BY MASS SPECTROMETRY [LARGE SCALE ANALYSIS]</scope>
    <source>
        <tissue>Brain</tissue>
        <tissue>Brown adipose tissue</tissue>
        <tissue>Heart</tissue>
        <tissue>Kidney</tissue>
        <tissue>Liver</tissue>
        <tissue>Lung</tissue>
        <tissue>Pancreas</tissue>
        <tissue>Spleen</tissue>
        <tissue>Testis</tissue>
    </source>
</reference>
<comment type="function">
    <text evidence="2">Component of triglyceride-rich very low density lipoproteins (VLDL) and high density lipoproteins (HDL) in plasma. Plays a multifaceted role in triglyceride homeostasis. Intracellularly, promotes hepatic very low density lipoprotein 1 (VLDL1) assembly and secretion; extracellularly, attenuates hydrolysis and clearance of triglyceride-rich lipoproteins (TRLs). Impairs the lipolysis of TRLs by inhibiting lipoprotein lipase and the hepatic uptake of TRLs by remnant receptors. Formed of several curved helices connected via semiflexible hinges, so that it can wrap tightly around the curved micelle surface and easily adapt to the different diameters of its natural binding partners.</text>
</comment>
<comment type="subcellular location">
    <subcellularLocation>
        <location evidence="2">Secreted</location>
    </subcellularLocation>
</comment>
<comment type="PTM">
    <text evidence="2">The most abundant glycoforms are characterized by an O-linked disaccharide galactose linked to N-acetylgalactosamine (Gal-GalNAc), further modified with up to 3 sialic acid residues. Less abundant glycoforms are characterized by more complex and fucosylated glycan moieties. O-glycosylated on Thr-94 with a core 1 or possibly core 8 glycan.</text>
</comment>
<comment type="mass spectrometry">
    <text>Strain C57BL/6. Without methionine sulfoxide.</text>
</comment>
<comment type="mass spectrometry">
    <text>Strain BALB/c. Without methionine sulfoxide.</text>
</comment>
<comment type="similarity">
    <text evidence="5">Belongs to the apolipoprotein C3 family.</text>
</comment>
<dbReference type="EMBL" id="L04149">
    <property type="status" value="NOT_ANNOTATED_CDS"/>
    <property type="molecule type" value="Genomic_DNA"/>
</dbReference>
<dbReference type="EMBL" id="L04150">
    <property type="status" value="NOT_ANNOTATED_CDS"/>
    <property type="molecule type" value="mRNA"/>
</dbReference>
<dbReference type="EMBL" id="AK002908">
    <property type="protein sequence ID" value="BAB22448.1"/>
    <property type="molecule type" value="mRNA"/>
</dbReference>
<dbReference type="EMBL" id="AK008260">
    <property type="protein sequence ID" value="BAB25563.1"/>
    <property type="molecule type" value="mRNA"/>
</dbReference>
<dbReference type="EMBL" id="BC021776">
    <property type="protein sequence ID" value="AAH21776.1"/>
    <property type="molecule type" value="mRNA"/>
</dbReference>
<dbReference type="CCDS" id="CCDS23141.1"/>
<dbReference type="PIR" id="B44364">
    <property type="entry name" value="B44364"/>
</dbReference>
<dbReference type="RefSeq" id="NP_001276685.1">
    <property type="nucleotide sequence ID" value="NM_001289756.1"/>
</dbReference>
<dbReference type="RefSeq" id="NP_075603.1">
    <property type="nucleotide sequence ID" value="NM_023114.4"/>
</dbReference>
<dbReference type="SMR" id="P33622"/>
<dbReference type="FunCoup" id="P33622">
    <property type="interactions" value="108"/>
</dbReference>
<dbReference type="STRING" id="10090.ENSMUSP00000113126"/>
<dbReference type="GlyCosmos" id="P33622">
    <property type="glycosylation" value="1 site, No reported glycans"/>
</dbReference>
<dbReference type="GlyGen" id="P33622">
    <property type="glycosylation" value="1 site"/>
</dbReference>
<dbReference type="iPTMnet" id="P33622"/>
<dbReference type="PhosphoSitePlus" id="P33622"/>
<dbReference type="CPTAC" id="non-CPTAC-4017"/>
<dbReference type="jPOST" id="P33622"/>
<dbReference type="PaxDb" id="10090-ENSMUSP00000034586"/>
<dbReference type="PeptideAtlas" id="P33622"/>
<dbReference type="ProteomicsDB" id="281829"/>
<dbReference type="DNASU" id="11814"/>
<dbReference type="GeneID" id="11814"/>
<dbReference type="KEGG" id="mmu:11814"/>
<dbReference type="UCSC" id="uc033jkf.1">
    <property type="organism name" value="mouse"/>
</dbReference>
<dbReference type="AGR" id="MGI:88055"/>
<dbReference type="CTD" id="345"/>
<dbReference type="MGI" id="MGI:88055">
    <property type="gene designation" value="Apoc3"/>
</dbReference>
<dbReference type="eggNOG" id="ENOG502SZ00">
    <property type="taxonomic scope" value="Eukaryota"/>
</dbReference>
<dbReference type="InParanoid" id="P33622"/>
<dbReference type="OrthoDB" id="9049572at2759"/>
<dbReference type="PhylomeDB" id="P33622"/>
<dbReference type="TreeFam" id="TF338209"/>
<dbReference type="Reactome" id="R-MMU-8963888">
    <property type="pathway name" value="Chylomicron assembly"/>
</dbReference>
<dbReference type="Reactome" id="R-MMU-8963901">
    <property type="pathway name" value="Chylomicron remodeling"/>
</dbReference>
<dbReference type="Reactome" id="R-MMU-8964058">
    <property type="pathway name" value="HDL remodeling"/>
</dbReference>
<dbReference type="Reactome" id="R-MMU-975634">
    <property type="pathway name" value="Retinoid metabolism and transport"/>
</dbReference>
<dbReference type="BioGRID-ORCS" id="11814">
    <property type="hits" value="1 hit in 77 CRISPR screens"/>
</dbReference>
<dbReference type="ChiTaRS" id="Apoc3">
    <property type="organism name" value="mouse"/>
</dbReference>
<dbReference type="PRO" id="PR:P33622"/>
<dbReference type="Proteomes" id="UP000000589">
    <property type="component" value="Unplaced"/>
</dbReference>
<dbReference type="RNAct" id="P33622">
    <property type="molecule type" value="protein"/>
</dbReference>
<dbReference type="GO" id="GO:0042627">
    <property type="term" value="C:chylomicron"/>
    <property type="evidence" value="ECO:0007669"/>
    <property type="project" value="UniProtKB-KW"/>
</dbReference>
<dbReference type="GO" id="GO:0005829">
    <property type="term" value="C:cytosol"/>
    <property type="evidence" value="ECO:0000304"/>
    <property type="project" value="Reactome"/>
</dbReference>
<dbReference type="GO" id="GO:0005576">
    <property type="term" value="C:extracellular region"/>
    <property type="evidence" value="ECO:0000304"/>
    <property type="project" value="Reactome"/>
</dbReference>
<dbReference type="GO" id="GO:0034361">
    <property type="term" value="C:very-low-density lipoprotein particle"/>
    <property type="evidence" value="ECO:0007669"/>
    <property type="project" value="UniProtKB-KW"/>
</dbReference>
<dbReference type="GO" id="GO:0008289">
    <property type="term" value="F:lipid binding"/>
    <property type="evidence" value="ECO:0007669"/>
    <property type="project" value="InterPro"/>
</dbReference>
<dbReference type="GO" id="GO:0008203">
    <property type="term" value="P:cholesterol metabolic process"/>
    <property type="evidence" value="ECO:0000315"/>
    <property type="project" value="MGI"/>
</dbReference>
<dbReference type="GO" id="GO:0006869">
    <property type="term" value="P:lipid transport"/>
    <property type="evidence" value="ECO:0007669"/>
    <property type="project" value="UniProtKB-KW"/>
</dbReference>
<dbReference type="GO" id="GO:0042157">
    <property type="term" value="P:lipoprotein metabolic process"/>
    <property type="evidence" value="ECO:0007669"/>
    <property type="project" value="InterPro"/>
</dbReference>
<dbReference type="GO" id="GO:0019433">
    <property type="term" value="P:triglyceride catabolic process"/>
    <property type="evidence" value="ECO:0000315"/>
    <property type="project" value="MGI"/>
</dbReference>
<dbReference type="GO" id="GO:0006641">
    <property type="term" value="P:triglyceride metabolic process"/>
    <property type="evidence" value="ECO:0000315"/>
    <property type="project" value="MGI"/>
</dbReference>
<dbReference type="GO" id="GO:0006642">
    <property type="term" value="P:triglyceride mobilization"/>
    <property type="evidence" value="ECO:0000315"/>
    <property type="project" value="MGI"/>
</dbReference>
<dbReference type="Gene3D" id="6.10.90.10">
    <property type="entry name" value="Apolipoprotein CIII"/>
    <property type="match status" value="1"/>
</dbReference>
<dbReference type="InterPro" id="IPR008403">
    <property type="entry name" value="Apo-CIII"/>
</dbReference>
<dbReference type="InterPro" id="IPR038195">
    <property type="entry name" value="Apo_CIII_sf"/>
</dbReference>
<dbReference type="PANTHER" id="PTHR14225">
    <property type="entry name" value="APOLIPOPROTEIN C-III"/>
    <property type="match status" value="1"/>
</dbReference>
<dbReference type="PANTHER" id="PTHR14225:SF0">
    <property type="entry name" value="APOLIPOPROTEIN C-III"/>
    <property type="match status" value="1"/>
</dbReference>
<dbReference type="Pfam" id="PF05778">
    <property type="entry name" value="Apo-CIII"/>
    <property type="match status" value="1"/>
</dbReference>
<proteinExistence type="evidence at protein level"/>
<feature type="signal peptide" evidence="3">
    <location>
        <begin position="1"/>
        <end position="20"/>
    </location>
</feature>
<feature type="chain" id="PRO_0000002033" description="Apolipoprotein C-III">
    <location>
        <begin position="21"/>
        <end position="99"/>
    </location>
</feature>
<feature type="region of interest" description="Lipid-binding" evidence="1">
    <location>
        <begin position="68"/>
        <end position="99"/>
    </location>
</feature>
<feature type="site" description="May interact with the LDL receptor" evidence="2">
    <location>
        <position position="41"/>
    </location>
</feature>
<feature type="modified residue" description="Methionine sulfoxide" evidence="4">
    <location>
        <position position="63"/>
    </location>
</feature>
<feature type="glycosylation site" description="O-linked (GalNAc...) threonine" evidence="2">
    <location>
        <position position="94"/>
    </location>
</feature>
<feature type="sequence conflict" description="In Ref. 1; L04150." evidence="5" ref="1">
    <original>V</original>
    <variation>A</variation>
    <location>
        <position position="57"/>
    </location>
</feature>
<feature type="sequence conflict" description="In Ref. 2; BAB22448/BAB25563." evidence="5" ref="2">
    <original>F</original>
    <variation>S</variation>
    <location>
        <position position="69"/>
    </location>
</feature>
<gene>
    <name type="primary">Apoc3</name>
</gene>
<protein>
    <recommendedName>
        <fullName>Apolipoprotein C-III</fullName>
        <shortName>Apo-CIII</shortName>
        <shortName>ApoC-III</shortName>
    </recommendedName>
    <alternativeName>
        <fullName>Apolipoprotein C3</fullName>
    </alternativeName>
</protein>
<keyword id="KW-0162">Chylomicron</keyword>
<keyword id="KW-0903">Direct protein sequencing</keyword>
<keyword id="KW-0325">Glycoprotein</keyword>
<keyword id="KW-0442">Lipid degradation</keyword>
<keyword id="KW-0443">Lipid metabolism</keyword>
<keyword id="KW-0445">Lipid transport</keyword>
<keyword id="KW-0558">Oxidation</keyword>
<keyword id="KW-1185">Reference proteome</keyword>
<keyword id="KW-0964">Secreted</keyword>
<keyword id="KW-0730">Sialic acid</keyword>
<keyword id="KW-0732">Signal</keyword>
<keyword id="KW-0813">Transport</keyword>
<keyword id="KW-0850">VLDL</keyword>
<organism>
    <name type="scientific">Mus musculus</name>
    <name type="common">Mouse</name>
    <dbReference type="NCBI Taxonomy" id="10090"/>
    <lineage>
        <taxon>Eukaryota</taxon>
        <taxon>Metazoa</taxon>
        <taxon>Chordata</taxon>
        <taxon>Craniata</taxon>
        <taxon>Vertebrata</taxon>
        <taxon>Euteleostomi</taxon>
        <taxon>Mammalia</taxon>
        <taxon>Eutheria</taxon>
        <taxon>Euarchontoglires</taxon>
        <taxon>Glires</taxon>
        <taxon>Rodentia</taxon>
        <taxon>Myomorpha</taxon>
        <taxon>Muroidea</taxon>
        <taxon>Muridae</taxon>
        <taxon>Murinae</taxon>
        <taxon>Mus</taxon>
        <taxon>Mus</taxon>
    </lineage>
</organism>